<keyword id="KW-0202">Cytokine</keyword>
<keyword id="KW-0325">Glycoprotein</keyword>
<keyword id="KW-1185">Reference proteome</keyword>
<keyword id="KW-0964">Secreted</keyword>
<keyword id="KW-0732">Signal</keyword>
<reference evidence="10" key="1">
    <citation type="journal article" date="2009" name="Mol. Immunol.">
        <title>Molecular characterization of novel interferon gamma receptor 1 isoforms in zebrafish (Danio rerio) and goldfish (Carassius auratus L.).</title>
        <authorList>
            <person name="Grayfer L."/>
            <person name="Belosevic M."/>
        </authorList>
    </citation>
    <scope>NUCLEOTIDE SEQUENCE [MRNA]</scope>
    <scope>FUNCTION</scope>
    <scope>SUBUNIT</scope>
    <scope>SUBCELLULAR LOCATION</scope>
</reference>
<reference evidence="7" key="2">
    <citation type="journal article" date="2010" name="J. Biol. Chem.">
        <title>Comparison of macrophage antimicrobial responses induced by type II interferons of the goldfish (Carassius auratus L.).</title>
        <authorList>
            <person name="Grayfer L."/>
            <person name="Garcia E.G."/>
            <person name="Belosevic M."/>
        </authorList>
    </citation>
    <scope>FUNCTION</scope>
    <scope>SUBCELLULAR LOCATION</scope>
    <scope>TISSUE SPECIFICITY</scope>
</reference>
<dbReference type="EMBL" id="GQ149696">
    <property type="protein sequence ID" value="ACV41807.1"/>
    <property type="molecule type" value="mRNA"/>
</dbReference>
<dbReference type="SMR" id="C8AW45"/>
<dbReference type="GlyCosmos" id="C8AW45">
    <property type="glycosylation" value="1 site, No reported glycans"/>
</dbReference>
<dbReference type="Proteomes" id="UP000515129">
    <property type="component" value="Unplaced"/>
</dbReference>
<dbReference type="GO" id="GO:0005615">
    <property type="term" value="C:extracellular space"/>
    <property type="evidence" value="ECO:0007669"/>
    <property type="project" value="UniProtKB-KW"/>
</dbReference>
<dbReference type="GO" id="GO:0005125">
    <property type="term" value="F:cytokine activity"/>
    <property type="evidence" value="ECO:0007669"/>
    <property type="project" value="UniProtKB-KW"/>
</dbReference>
<dbReference type="GO" id="GO:0005133">
    <property type="term" value="F:type II interferon receptor binding"/>
    <property type="evidence" value="ECO:0007669"/>
    <property type="project" value="InterPro"/>
</dbReference>
<dbReference type="GO" id="GO:0006955">
    <property type="term" value="P:immune response"/>
    <property type="evidence" value="ECO:0007669"/>
    <property type="project" value="InterPro"/>
</dbReference>
<dbReference type="Gene3D" id="1.20.1250.10">
    <property type="match status" value="1"/>
</dbReference>
<dbReference type="InterPro" id="IPR009079">
    <property type="entry name" value="4_helix_cytokine-like_core"/>
</dbReference>
<dbReference type="InterPro" id="IPR002069">
    <property type="entry name" value="Interferon_gamma"/>
</dbReference>
<dbReference type="PANTHER" id="PTHR11419">
    <property type="entry name" value="INTERFERON GAMMA"/>
    <property type="match status" value="1"/>
</dbReference>
<dbReference type="PANTHER" id="PTHR11419:SF0">
    <property type="entry name" value="INTERFERON GAMMA"/>
    <property type="match status" value="1"/>
</dbReference>
<dbReference type="SUPFAM" id="SSF47266">
    <property type="entry name" value="4-helical cytokines"/>
    <property type="match status" value="1"/>
</dbReference>
<organism evidence="10">
    <name type="scientific">Carassius auratus</name>
    <name type="common">Goldfish</name>
    <dbReference type="NCBI Taxonomy" id="7957"/>
    <lineage>
        <taxon>Eukaryota</taxon>
        <taxon>Metazoa</taxon>
        <taxon>Chordata</taxon>
        <taxon>Craniata</taxon>
        <taxon>Vertebrata</taxon>
        <taxon>Euteleostomi</taxon>
        <taxon>Actinopterygii</taxon>
        <taxon>Neopterygii</taxon>
        <taxon>Teleostei</taxon>
        <taxon>Ostariophysi</taxon>
        <taxon>Cypriniformes</taxon>
        <taxon>Cyprinidae</taxon>
        <taxon>Cyprininae</taxon>
        <taxon>Carassius</taxon>
    </lineage>
</organism>
<proteinExistence type="evidence at protein level"/>
<evidence type="ECO:0000255" key="1"/>
<evidence type="ECO:0000255" key="2">
    <source>
        <dbReference type="PROSITE-ProRule" id="PRU00498"/>
    </source>
</evidence>
<evidence type="ECO:0000269" key="3">
    <source>
    </source>
</evidence>
<evidence type="ECO:0000269" key="4">
    <source>
    </source>
</evidence>
<evidence type="ECO:0000303" key="5">
    <source>
    </source>
</evidence>
<evidence type="ECO:0000303" key="6">
    <source>
    </source>
</evidence>
<evidence type="ECO:0000305" key="7"/>
<evidence type="ECO:0000305" key="8">
    <source>
    </source>
</evidence>
<evidence type="ECO:0000305" key="9">
    <source>
    </source>
</evidence>
<evidence type="ECO:0000312" key="10">
    <source>
        <dbReference type="EMBL" id="ACV41807.1"/>
    </source>
</evidence>
<sequence length="166" mass="19196">MYCRLNMVYLICALLLIVSLQGTVGARLPQSQKDKEQMLKNVREKIESLQKHYHTTGTEWFGKSVLSSHLHQLNSKASCTCQSLLLDSMLNITETIFQDMRGKAENEETKTSLRDVMTEVKMLRHKYSEEQKVWRELQDIHSVEVNNGKIQKGALNSFLILYDLAY</sequence>
<gene>
    <name evidence="6" type="primary">ifng1r</name>
</gene>
<feature type="signal peptide" evidence="1">
    <location>
        <begin position="1"/>
        <end position="26"/>
    </location>
</feature>
<feature type="chain" id="PRO_5002987380" description="Interferon gamma-related" evidence="1">
    <location>
        <begin position="27"/>
        <end position="166"/>
    </location>
</feature>
<feature type="glycosylation site" description="N-linked (GlcNAc...) asparagine" evidence="2">
    <location>
        <position position="91"/>
    </location>
</feature>
<accession>C8AW45</accession>
<comment type="function">
    <text evidence="3 4">Cytokine which binds to interferon gamma receptor 1 (ifngr1) (PubMed:19577303, PubMed:20507977). Has activating effects on primary macrophages (PubMed:20507977). Induces nitric oxide production and phagocytic responses in macrophages (PubMed:20507977). Primes monocytes for production of reactive oxygen intermediates (ROI), although the effect is short-lived (PubMed:20507977). Also has inhibitory effects on monocyte priming by ifng1 (interferon gamma 1) and tnfb (TNF-alpha 2) (PubMed:20507977). Stimulates phosphorylation of the JAK/STAT signal transducer stat1, but fails to induce stat1 nuclear localization (PubMed:20507977). Promotes increased expression of a number of genes important for macrophage activity, including the interferon regulatory factors irf2 and irf9 (PubMed:20507977).</text>
</comment>
<comment type="subunit">
    <text evidence="3">Homodimer.</text>
</comment>
<comment type="subcellular location">
    <subcellularLocation>
        <location evidence="8 9">Secreted</location>
    </subcellularLocation>
</comment>
<comment type="tissue specificity">
    <text evidence="4">Strongly expressed in spleen. Also detected at lower levels in gill, kidney, heart, brain and intestine. In immune cell populations, expressed at highest levels in peripheral blood leukocytes and at lower levels in splenocytes, granulocytes, monocytes and macrophages.</text>
</comment>
<comment type="similarity">
    <text evidence="7">Belongs to the type II (or gamma) interferon family.</text>
</comment>
<protein>
    <recommendedName>
        <fullName evidence="6">Interferon gamma-related</fullName>
    </recommendedName>
    <alternativeName>
        <fullName evidence="5">Interferon gamma 1</fullName>
    </alternativeName>
</protein>
<name>IFNGR_CARAU</name>